<gene>
    <name type="primary">GORASP1</name>
    <name type="synonym">GOLPH5</name>
    <name type="synonym">GRASP65</name>
</gene>
<sequence length="440" mass="46482">MGLGVSAEQPAGGAEGFHLHGVQENSPAQQAGLEPYFDFIITIGHSRLNKENDTLKALLKANVEKPVKLEVFNMKTMRVREVEVVPSNMWGGQGLLGASVRFCSFRRASEQVWHVLDVEPSSPAALAGLRPYTDYVVGSDQILQESEDFFTLIESHEGKPLKLMVYNSKSDSCREVTVTPNAAWGGEGSLGCGIGYGYLHRIPTQPPSYHKKPPGTPPPSALPLGAPPPDALPPGPTPEDSPSLETGSRQSDYMEALLQAPGSSMEDPLPGPGSPSHSAPDPDGLPHFMETPLQPPPPVQRVMDPGFLDVSGISLLDNSNASVWPSLPSSTELTTTAVSTSGPEDICSSSSSHERGGEATWSGSEFEVSFLDSPGAQAQADHLPQLTLPDSLTSAASPEDGLSAELLEAQAEEEPASTEGLDTGTEAEGLDSQAQISTTE</sequence>
<name>GORS1_HUMAN</name>
<evidence type="ECO:0000250" key="1"/>
<evidence type="ECO:0000250" key="2">
    <source>
        <dbReference type="UniProtKB" id="O35254"/>
    </source>
</evidence>
<evidence type="ECO:0000250" key="3">
    <source>
        <dbReference type="UniProtKB" id="Q91X51"/>
    </source>
</evidence>
<evidence type="ECO:0000255" key="4">
    <source>
        <dbReference type="PROSITE-ProRule" id="PRU01212"/>
    </source>
</evidence>
<evidence type="ECO:0000255" key="5">
    <source>
        <dbReference type="PROSITE-ProRule" id="PRU01214"/>
    </source>
</evidence>
<evidence type="ECO:0000256" key="6">
    <source>
        <dbReference type="SAM" id="MobiDB-lite"/>
    </source>
</evidence>
<evidence type="ECO:0000269" key="7">
    <source>
    </source>
</evidence>
<evidence type="ECO:0000269" key="8">
    <source>
    </source>
</evidence>
<evidence type="ECO:0000269" key="9">
    <source>
    </source>
</evidence>
<evidence type="ECO:0000269" key="10">
    <source>
    </source>
</evidence>
<evidence type="ECO:0000269" key="11">
    <source>
    </source>
</evidence>
<evidence type="ECO:0000303" key="12">
    <source>
    </source>
</evidence>
<evidence type="ECO:0000303" key="13">
    <source>
    </source>
</evidence>
<evidence type="ECO:0000303" key="14">
    <source>
    </source>
</evidence>
<evidence type="ECO:0000303" key="15">
    <source>
    </source>
</evidence>
<evidence type="ECO:0000305" key="16"/>
<evidence type="ECO:0007744" key="17">
    <source>
        <dbReference type="PDB" id="4REY"/>
    </source>
</evidence>
<evidence type="ECO:0007744" key="18">
    <source>
    </source>
</evidence>
<evidence type="ECO:0007744" key="19">
    <source>
    </source>
</evidence>
<evidence type="ECO:0007744" key="20">
    <source>
    </source>
</evidence>
<evidence type="ECO:0007829" key="21">
    <source>
        <dbReference type="PDB" id="4REY"/>
    </source>
</evidence>
<evidence type="ECO:0007829" key="22">
    <source>
        <dbReference type="PDB" id="6G8W"/>
    </source>
</evidence>
<dbReference type="EMBL" id="AJ409349">
    <property type="protein sequence ID" value="CAC35160.1"/>
    <property type="molecule type" value="mRNA"/>
</dbReference>
<dbReference type="EMBL" id="AK091168">
    <property type="protein sequence ID" value="BAC03598.1"/>
    <property type="molecule type" value="mRNA"/>
</dbReference>
<dbReference type="EMBL" id="AK124755">
    <property type="protein sequence ID" value="BAG54090.1"/>
    <property type="molecule type" value="mRNA"/>
</dbReference>
<dbReference type="EMBL" id="CH471055">
    <property type="protein sequence ID" value="EAW64554.1"/>
    <property type="molecule type" value="Genomic_DNA"/>
</dbReference>
<dbReference type="EMBL" id="BC008928">
    <property type="protein sequence ID" value="AAH08928.1"/>
    <property type="molecule type" value="mRNA"/>
</dbReference>
<dbReference type="EMBL" id="BC075854">
    <property type="protein sequence ID" value="AAH75854.1"/>
    <property type="molecule type" value="mRNA"/>
</dbReference>
<dbReference type="EMBL" id="BC103826">
    <property type="protein sequence ID" value="AAI03827.1"/>
    <property type="molecule type" value="mRNA"/>
</dbReference>
<dbReference type="EMBL" id="BC103827">
    <property type="protein sequence ID" value="AAI03828.1"/>
    <property type="molecule type" value="mRNA"/>
</dbReference>
<dbReference type="CCDS" id="CCDS2681.1">
    <molecule id="Q9BQQ3-1"/>
</dbReference>
<dbReference type="RefSeq" id="NP_001265718.1">
    <property type="nucleotide sequence ID" value="NM_001278789.1"/>
</dbReference>
<dbReference type="RefSeq" id="NP_001265719.1">
    <property type="nucleotide sequence ID" value="NM_001278790.1"/>
</dbReference>
<dbReference type="RefSeq" id="NP_114105.1">
    <molecule id="Q9BQQ3-1"/>
    <property type="nucleotide sequence ID" value="NM_031899.4"/>
</dbReference>
<dbReference type="PDB" id="4REY">
    <property type="method" value="X-ray"/>
    <property type="resolution" value="1.96 A"/>
    <property type="chains" value="A=2-210"/>
</dbReference>
<dbReference type="PDB" id="6G8T">
    <property type="method" value="X-ray"/>
    <property type="resolution" value="2.67 A"/>
    <property type="chains" value="A=1-118"/>
</dbReference>
<dbReference type="PDB" id="6G8W">
    <property type="method" value="X-ray"/>
    <property type="resolution" value="2.12 A"/>
    <property type="chains" value="A/B=108-204"/>
</dbReference>
<dbReference type="PDBsum" id="4REY"/>
<dbReference type="PDBsum" id="6G8T"/>
<dbReference type="PDBsum" id="6G8W"/>
<dbReference type="SMR" id="Q9BQQ3"/>
<dbReference type="BioGRID" id="122232">
    <property type="interactions" value="114"/>
</dbReference>
<dbReference type="ComplexPortal" id="CPX-874">
    <property type="entry name" value="GRASP65-GM130 Golgi stacking complex"/>
</dbReference>
<dbReference type="CORUM" id="Q9BQQ3"/>
<dbReference type="FunCoup" id="Q9BQQ3">
    <property type="interactions" value="879"/>
</dbReference>
<dbReference type="IntAct" id="Q9BQQ3">
    <property type="interactions" value="63"/>
</dbReference>
<dbReference type="MINT" id="Q9BQQ3"/>
<dbReference type="STRING" id="9606.ENSP00000313869"/>
<dbReference type="GlyGen" id="Q9BQQ3">
    <property type="glycosylation" value="2 sites"/>
</dbReference>
<dbReference type="iPTMnet" id="Q9BQQ3"/>
<dbReference type="PhosphoSitePlus" id="Q9BQQ3"/>
<dbReference type="BioMuta" id="GORASP1"/>
<dbReference type="DMDM" id="51316077"/>
<dbReference type="jPOST" id="Q9BQQ3"/>
<dbReference type="MassIVE" id="Q9BQQ3"/>
<dbReference type="PaxDb" id="9606-ENSP00000313869"/>
<dbReference type="PeptideAtlas" id="Q9BQQ3"/>
<dbReference type="ProteomicsDB" id="78706">
    <molecule id="Q9BQQ3-1"/>
</dbReference>
<dbReference type="ProteomicsDB" id="78707">
    <molecule id="Q9BQQ3-2"/>
</dbReference>
<dbReference type="ProteomicsDB" id="78708">
    <molecule id="Q9BQQ3-3"/>
</dbReference>
<dbReference type="Pumba" id="Q9BQQ3"/>
<dbReference type="Antibodypedia" id="28859">
    <property type="antibodies" value="281 antibodies from 33 providers"/>
</dbReference>
<dbReference type="DNASU" id="64689"/>
<dbReference type="Ensembl" id="ENST00000319283.8">
    <molecule id="Q9BQQ3-1"/>
    <property type="protein sequence ID" value="ENSP00000313869.3"/>
    <property type="gene ID" value="ENSG00000114745.15"/>
</dbReference>
<dbReference type="Ensembl" id="ENST00000431601.6">
    <molecule id="Q9BQQ3-3"/>
    <property type="protein sequence ID" value="ENSP00000403552.1"/>
    <property type="gene ID" value="ENSG00000114745.15"/>
</dbReference>
<dbReference type="Ensembl" id="ENST00000452389.7">
    <molecule id="Q9BQQ3-2"/>
    <property type="protein sequence ID" value="ENSP00000403167.2"/>
    <property type="gene ID" value="ENSG00000114745.15"/>
</dbReference>
<dbReference type="GeneID" id="64689"/>
<dbReference type="KEGG" id="hsa:64689"/>
<dbReference type="MANE-Select" id="ENST00000319283.8">
    <property type="protein sequence ID" value="ENSP00000313869.3"/>
    <property type="RefSeq nucleotide sequence ID" value="NM_031899.4"/>
    <property type="RefSeq protein sequence ID" value="NP_114105.1"/>
</dbReference>
<dbReference type="UCSC" id="uc003ciw.3">
    <molecule id="Q9BQQ3-1"/>
    <property type="organism name" value="human"/>
</dbReference>
<dbReference type="AGR" id="HGNC:16769"/>
<dbReference type="CTD" id="64689"/>
<dbReference type="DisGeNET" id="64689"/>
<dbReference type="GeneCards" id="GORASP1"/>
<dbReference type="HGNC" id="HGNC:16769">
    <property type="gene designation" value="GORASP1"/>
</dbReference>
<dbReference type="HPA" id="ENSG00000114745">
    <property type="expression patterns" value="Low tissue specificity"/>
</dbReference>
<dbReference type="MIM" id="606867">
    <property type="type" value="gene"/>
</dbReference>
<dbReference type="neXtProt" id="NX_Q9BQQ3"/>
<dbReference type="OpenTargets" id="ENSG00000114745"/>
<dbReference type="PharmGKB" id="PA28814"/>
<dbReference type="VEuPathDB" id="HostDB:ENSG00000114745"/>
<dbReference type="eggNOG" id="KOG3834">
    <property type="taxonomic scope" value="Eukaryota"/>
</dbReference>
<dbReference type="GeneTree" id="ENSGT00390000008686"/>
<dbReference type="HOGENOM" id="CLU_025095_1_0_1"/>
<dbReference type="InParanoid" id="Q9BQQ3"/>
<dbReference type="OMA" id="NGYIEAP"/>
<dbReference type="OrthoDB" id="3318at2759"/>
<dbReference type="PAN-GO" id="Q9BQQ3">
    <property type="GO annotations" value="2 GO annotations based on evolutionary models"/>
</dbReference>
<dbReference type="PhylomeDB" id="Q9BQQ3"/>
<dbReference type="PathwayCommons" id="Q9BQQ3"/>
<dbReference type="Reactome" id="R-HSA-162658">
    <property type="pathway name" value="Golgi Cisternae Pericentriolar Stack Reorganization"/>
</dbReference>
<dbReference type="Reactome" id="R-HSA-204005">
    <property type="pathway name" value="COPII-mediated vesicle transport"/>
</dbReference>
<dbReference type="Reactome" id="R-HSA-6807878">
    <property type="pathway name" value="COPI-mediated anterograde transport"/>
</dbReference>
<dbReference type="SignaLink" id="Q9BQQ3"/>
<dbReference type="SIGNOR" id="Q9BQQ3"/>
<dbReference type="BioGRID-ORCS" id="64689">
    <property type="hits" value="13 hits in 1169 CRISPR screens"/>
</dbReference>
<dbReference type="ChiTaRS" id="GORASP1">
    <property type="organism name" value="human"/>
</dbReference>
<dbReference type="EvolutionaryTrace" id="Q9BQQ3"/>
<dbReference type="GeneWiki" id="GORASP1"/>
<dbReference type="GenomeRNAi" id="64689"/>
<dbReference type="Pharos" id="Q9BQQ3">
    <property type="development level" value="Tbio"/>
</dbReference>
<dbReference type="PRO" id="PR:Q9BQQ3"/>
<dbReference type="Proteomes" id="UP000005640">
    <property type="component" value="Chromosome 3"/>
</dbReference>
<dbReference type="RNAct" id="Q9BQQ3">
    <property type="molecule type" value="protein"/>
</dbReference>
<dbReference type="Bgee" id="ENSG00000114745">
    <property type="expression patterns" value="Expressed in right lobe of thyroid gland and 200 other cell types or tissues"/>
</dbReference>
<dbReference type="ExpressionAtlas" id="Q9BQQ3">
    <property type="expression patterns" value="baseline and differential"/>
</dbReference>
<dbReference type="GO" id="GO:0005801">
    <property type="term" value="C:cis-Golgi network"/>
    <property type="evidence" value="ECO:0000303"/>
    <property type="project" value="ComplexPortal"/>
</dbReference>
<dbReference type="GO" id="GO:0033116">
    <property type="term" value="C:endoplasmic reticulum-Golgi intermediate compartment membrane"/>
    <property type="evidence" value="ECO:0000304"/>
    <property type="project" value="Reactome"/>
</dbReference>
<dbReference type="GO" id="GO:0005794">
    <property type="term" value="C:Golgi apparatus"/>
    <property type="evidence" value="ECO:0000314"/>
    <property type="project" value="HPA"/>
</dbReference>
<dbReference type="GO" id="GO:0000139">
    <property type="term" value="C:Golgi membrane"/>
    <property type="evidence" value="ECO:0000304"/>
    <property type="project" value="Reactome"/>
</dbReference>
<dbReference type="GO" id="GO:0046872">
    <property type="term" value="F:metal ion binding"/>
    <property type="evidence" value="ECO:0007669"/>
    <property type="project" value="UniProtKB-KW"/>
</dbReference>
<dbReference type="GO" id="GO:0061951">
    <property type="term" value="P:establishment of protein localization to plasma membrane"/>
    <property type="evidence" value="ECO:0000315"/>
    <property type="project" value="UniProtKB"/>
</dbReference>
<dbReference type="GO" id="GO:0007030">
    <property type="term" value="P:Golgi organization"/>
    <property type="evidence" value="ECO:0000250"/>
    <property type="project" value="UniProtKB"/>
</dbReference>
<dbReference type="GO" id="GO:0090161">
    <property type="term" value="P:Golgi ribbon formation"/>
    <property type="evidence" value="ECO:0000316"/>
    <property type="project" value="UniProtKB"/>
</dbReference>
<dbReference type="GO" id="GO:0050774">
    <property type="term" value="P:negative regulation of dendrite morphogenesis"/>
    <property type="evidence" value="ECO:0000315"/>
    <property type="project" value="UniProtKB"/>
</dbReference>
<dbReference type="GO" id="GO:0006487">
    <property type="term" value="P:protein N-linked glycosylation"/>
    <property type="evidence" value="ECO:0007669"/>
    <property type="project" value="Ensembl"/>
</dbReference>
<dbReference type="GO" id="GO:0015031">
    <property type="term" value="P:protein transport"/>
    <property type="evidence" value="ECO:0007669"/>
    <property type="project" value="UniProtKB-KW"/>
</dbReference>
<dbReference type="FunFam" id="2.30.42.10:FF:000026">
    <property type="entry name" value="Golgi reassembly stacking protein 2"/>
    <property type="match status" value="1"/>
</dbReference>
<dbReference type="FunFam" id="2.30.42.10:FF:000056">
    <property type="entry name" value="Golgi reassembly-stacking protein 2 isoform 1"/>
    <property type="match status" value="1"/>
</dbReference>
<dbReference type="Gene3D" id="2.30.42.10">
    <property type="match status" value="2"/>
</dbReference>
<dbReference type="InterPro" id="IPR007583">
    <property type="entry name" value="GRASP55_65"/>
</dbReference>
<dbReference type="InterPro" id="IPR024958">
    <property type="entry name" value="GRASP_PDZ"/>
</dbReference>
<dbReference type="InterPro" id="IPR036034">
    <property type="entry name" value="PDZ_sf"/>
</dbReference>
<dbReference type="PANTHER" id="PTHR12893">
    <property type="entry name" value="GOLGI REASSEMBLY STACKING PROTEIN GRASP"/>
    <property type="match status" value="1"/>
</dbReference>
<dbReference type="PANTHER" id="PTHR12893:SF2">
    <property type="entry name" value="GOLGI REASSEMBLY-STACKING PROTEIN 1"/>
    <property type="match status" value="1"/>
</dbReference>
<dbReference type="Pfam" id="PF04495">
    <property type="entry name" value="GRASP55_65"/>
    <property type="match status" value="1"/>
</dbReference>
<dbReference type="SUPFAM" id="SSF50156">
    <property type="entry name" value="PDZ domain-like"/>
    <property type="match status" value="2"/>
</dbReference>
<dbReference type="PROSITE" id="PS51865">
    <property type="entry name" value="PDZ_GRASP"/>
    <property type="match status" value="2"/>
</dbReference>
<protein>
    <recommendedName>
        <fullName>Golgi reassembly-stacking protein 1</fullName>
    </recommendedName>
    <alternativeName>
        <fullName>Golgi peripheral membrane protein p65</fullName>
    </alternativeName>
    <alternativeName>
        <fullName>Golgi phosphoprotein 5</fullName>
        <shortName>GOLPH5</shortName>
    </alternativeName>
    <alternativeName>
        <fullName>Golgi reassembly-stacking protein of 65 kDa</fullName>
        <shortName evidence="12 15">GRASP65</shortName>
    </alternativeName>
</protein>
<reference key="1">
    <citation type="submission" date="2001-03" db="EMBL/GenBank/DDBJ databases">
        <title>Refined physical mapping and genomic structure of a 4-Mb region (AP-20) on human chromosome 3p22-p21.33 implicated in lung and kidney cancerogenesis.</title>
        <authorList>
            <person name="Protopopov A."/>
            <person name="Kashuba V."/>
            <person name="Kvasha S."/>
            <person name="Klein G."/>
            <person name="Zabarovsky E."/>
        </authorList>
    </citation>
    <scope>NUCLEOTIDE SEQUENCE [MRNA] (ISOFORM 1)</scope>
    <source>
        <tissue>Lung</tissue>
    </source>
</reference>
<reference key="2">
    <citation type="journal article" date="2004" name="Nat. Genet.">
        <title>Complete sequencing and characterization of 21,243 full-length human cDNAs.</title>
        <authorList>
            <person name="Ota T."/>
            <person name="Suzuki Y."/>
            <person name="Nishikawa T."/>
            <person name="Otsuki T."/>
            <person name="Sugiyama T."/>
            <person name="Irie R."/>
            <person name="Wakamatsu A."/>
            <person name="Hayashi K."/>
            <person name="Sato H."/>
            <person name="Nagai K."/>
            <person name="Kimura K."/>
            <person name="Makita H."/>
            <person name="Sekine M."/>
            <person name="Obayashi M."/>
            <person name="Nishi T."/>
            <person name="Shibahara T."/>
            <person name="Tanaka T."/>
            <person name="Ishii S."/>
            <person name="Yamamoto J."/>
            <person name="Saito K."/>
            <person name="Kawai Y."/>
            <person name="Isono Y."/>
            <person name="Nakamura Y."/>
            <person name="Nagahari K."/>
            <person name="Murakami K."/>
            <person name="Yasuda T."/>
            <person name="Iwayanagi T."/>
            <person name="Wagatsuma M."/>
            <person name="Shiratori A."/>
            <person name="Sudo H."/>
            <person name="Hosoiri T."/>
            <person name="Kaku Y."/>
            <person name="Kodaira H."/>
            <person name="Kondo H."/>
            <person name="Sugawara M."/>
            <person name="Takahashi M."/>
            <person name="Kanda K."/>
            <person name="Yokoi T."/>
            <person name="Furuya T."/>
            <person name="Kikkawa E."/>
            <person name="Omura Y."/>
            <person name="Abe K."/>
            <person name="Kamihara K."/>
            <person name="Katsuta N."/>
            <person name="Sato K."/>
            <person name="Tanikawa M."/>
            <person name="Yamazaki M."/>
            <person name="Ninomiya K."/>
            <person name="Ishibashi T."/>
            <person name="Yamashita H."/>
            <person name="Murakawa K."/>
            <person name="Fujimori K."/>
            <person name="Tanai H."/>
            <person name="Kimata M."/>
            <person name="Watanabe M."/>
            <person name="Hiraoka S."/>
            <person name="Chiba Y."/>
            <person name="Ishida S."/>
            <person name="Ono Y."/>
            <person name="Takiguchi S."/>
            <person name="Watanabe S."/>
            <person name="Yosida M."/>
            <person name="Hotuta T."/>
            <person name="Kusano J."/>
            <person name="Kanehori K."/>
            <person name="Takahashi-Fujii A."/>
            <person name="Hara H."/>
            <person name="Tanase T.-O."/>
            <person name="Nomura Y."/>
            <person name="Togiya S."/>
            <person name="Komai F."/>
            <person name="Hara R."/>
            <person name="Takeuchi K."/>
            <person name="Arita M."/>
            <person name="Imose N."/>
            <person name="Musashino K."/>
            <person name="Yuuki H."/>
            <person name="Oshima A."/>
            <person name="Sasaki N."/>
            <person name="Aotsuka S."/>
            <person name="Yoshikawa Y."/>
            <person name="Matsunawa H."/>
            <person name="Ichihara T."/>
            <person name="Shiohata N."/>
            <person name="Sano S."/>
            <person name="Moriya S."/>
            <person name="Momiyama H."/>
            <person name="Satoh N."/>
            <person name="Takami S."/>
            <person name="Terashima Y."/>
            <person name="Suzuki O."/>
            <person name="Nakagawa S."/>
            <person name="Senoh A."/>
            <person name="Mizoguchi H."/>
            <person name="Goto Y."/>
            <person name="Shimizu F."/>
            <person name="Wakebe H."/>
            <person name="Hishigaki H."/>
            <person name="Watanabe T."/>
            <person name="Sugiyama A."/>
            <person name="Takemoto M."/>
            <person name="Kawakami B."/>
            <person name="Yamazaki M."/>
            <person name="Watanabe K."/>
            <person name="Kumagai A."/>
            <person name="Itakura S."/>
            <person name="Fukuzumi Y."/>
            <person name="Fujimori Y."/>
            <person name="Komiyama M."/>
            <person name="Tashiro H."/>
            <person name="Tanigami A."/>
            <person name="Fujiwara T."/>
            <person name="Ono T."/>
            <person name="Yamada K."/>
            <person name="Fujii Y."/>
            <person name="Ozaki K."/>
            <person name="Hirao M."/>
            <person name="Ohmori Y."/>
            <person name="Kawabata A."/>
            <person name="Hikiji T."/>
            <person name="Kobatake N."/>
            <person name="Inagaki H."/>
            <person name="Ikema Y."/>
            <person name="Okamoto S."/>
            <person name="Okitani R."/>
            <person name="Kawakami T."/>
            <person name="Noguchi S."/>
            <person name="Itoh T."/>
            <person name="Shigeta K."/>
            <person name="Senba T."/>
            <person name="Matsumura K."/>
            <person name="Nakajima Y."/>
            <person name="Mizuno T."/>
            <person name="Morinaga M."/>
            <person name="Sasaki M."/>
            <person name="Togashi T."/>
            <person name="Oyama M."/>
            <person name="Hata H."/>
            <person name="Watanabe M."/>
            <person name="Komatsu T."/>
            <person name="Mizushima-Sugano J."/>
            <person name="Satoh T."/>
            <person name="Shirai Y."/>
            <person name="Takahashi Y."/>
            <person name="Nakagawa K."/>
            <person name="Okumura K."/>
            <person name="Nagase T."/>
            <person name="Nomura N."/>
            <person name="Kikuchi H."/>
            <person name="Masuho Y."/>
            <person name="Yamashita R."/>
            <person name="Nakai K."/>
            <person name="Yada T."/>
            <person name="Nakamura Y."/>
            <person name="Ohara O."/>
            <person name="Isogai T."/>
            <person name="Sugano S."/>
        </authorList>
    </citation>
    <scope>NUCLEOTIDE SEQUENCE [LARGE SCALE MRNA] (ISOFORMS 1 AND 3)</scope>
    <source>
        <tissue>Brain</tissue>
        <tissue>Tongue</tissue>
    </source>
</reference>
<reference key="3">
    <citation type="submission" date="2005-07" db="EMBL/GenBank/DDBJ databases">
        <authorList>
            <person name="Mural R.J."/>
            <person name="Istrail S."/>
            <person name="Sutton G.G."/>
            <person name="Florea L."/>
            <person name="Halpern A.L."/>
            <person name="Mobarry C.M."/>
            <person name="Lippert R."/>
            <person name="Walenz B."/>
            <person name="Shatkay H."/>
            <person name="Dew I."/>
            <person name="Miller J.R."/>
            <person name="Flanigan M.J."/>
            <person name="Edwards N.J."/>
            <person name="Bolanos R."/>
            <person name="Fasulo D."/>
            <person name="Halldorsson B.V."/>
            <person name="Hannenhalli S."/>
            <person name="Turner R."/>
            <person name="Yooseph S."/>
            <person name="Lu F."/>
            <person name="Nusskern D.R."/>
            <person name="Shue B.C."/>
            <person name="Zheng X.H."/>
            <person name="Zhong F."/>
            <person name="Delcher A.L."/>
            <person name="Huson D.H."/>
            <person name="Kravitz S.A."/>
            <person name="Mouchard L."/>
            <person name="Reinert K."/>
            <person name="Remington K.A."/>
            <person name="Clark A.G."/>
            <person name="Waterman M.S."/>
            <person name="Eichler E.E."/>
            <person name="Adams M.D."/>
            <person name="Hunkapiller M.W."/>
            <person name="Myers E.W."/>
            <person name="Venter J.C."/>
        </authorList>
    </citation>
    <scope>NUCLEOTIDE SEQUENCE [LARGE SCALE GENOMIC DNA]</scope>
</reference>
<reference key="4">
    <citation type="journal article" date="2004" name="Genome Res.">
        <title>The status, quality, and expansion of the NIH full-length cDNA project: the Mammalian Gene Collection (MGC).</title>
        <authorList>
            <consortium name="The MGC Project Team"/>
        </authorList>
    </citation>
    <scope>NUCLEOTIDE SEQUENCE [LARGE SCALE MRNA] (ISOFORMS 1 AND 2)</scope>
    <source>
        <tissue>Eye</tissue>
        <tissue>Placenta</tissue>
    </source>
</reference>
<reference key="5">
    <citation type="journal article" date="2001" name="Nat. Cell Biol.">
        <title>The GM130 and GRASP65 Golgi proteins cycle through and define a subdomain of the intermediate compartment.</title>
        <authorList>
            <person name="Marra P."/>
            <person name="Maffucci T."/>
            <person name="Daniele T."/>
            <person name="Tullio G.D."/>
            <person name="Ikehara Y."/>
            <person name="Chan E.K."/>
            <person name="Luini A."/>
            <person name="Beznoussenko G."/>
            <person name="Mironov A."/>
            <person name="De Matteis M.A."/>
        </authorList>
    </citation>
    <scope>SUBCELLULAR LOCATION</scope>
</reference>
<reference key="6">
    <citation type="journal article" date="2006" name="Nat. Cell Biol.">
        <title>GM130 and GRASP65-dependent lateral cisternal fusion allows uniform Golgi-enzyme distribution.</title>
        <authorList>
            <person name="Puthenveedu M.A."/>
            <person name="Bachert C."/>
            <person name="Puri S."/>
            <person name="Lanni F."/>
            <person name="Linstedt A.D."/>
        </authorList>
    </citation>
    <scope>FUNCTION</scope>
    <scope>INTERACTION WITH GOLGA2</scope>
</reference>
<reference key="7">
    <citation type="journal article" date="2008" name="Proc. Natl. Acad. Sci. U.S.A.">
        <title>A quantitative atlas of mitotic phosphorylation.</title>
        <authorList>
            <person name="Dephoure N."/>
            <person name="Zhou C."/>
            <person name="Villen J."/>
            <person name="Beausoleil S.A."/>
            <person name="Bakalarski C.E."/>
            <person name="Elledge S.J."/>
            <person name="Gygi S.P."/>
        </authorList>
    </citation>
    <scope>PHOSPHORYLATION [LARGE SCALE ANALYSIS] AT THR-216</scope>
    <scope>IDENTIFICATION BY MASS SPECTROMETRY [LARGE SCALE ANALYSIS]</scope>
    <source>
        <tissue>Cervix carcinoma</tissue>
    </source>
</reference>
<reference key="8">
    <citation type="journal article" date="2009" name="Mol. Cell. Proteomics">
        <title>Large-scale proteomics analysis of the human kinome.</title>
        <authorList>
            <person name="Oppermann F.S."/>
            <person name="Gnad F."/>
            <person name="Olsen J.V."/>
            <person name="Hornberger R."/>
            <person name="Greff Z."/>
            <person name="Keri G."/>
            <person name="Mann M."/>
            <person name="Daub H."/>
        </authorList>
    </citation>
    <scope>PHOSPHORYLATION [LARGE SCALE ANALYSIS] AT THR-216</scope>
    <scope>IDENTIFICATION BY MASS SPECTROMETRY [LARGE SCALE ANALYSIS]</scope>
</reference>
<reference key="9">
    <citation type="journal article" date="2009" name="Sci. Signal.">
        <title>Quantitative phosphoproteomic analysis of T cell receptor signaling reveals system-wide modulation of protein-protein interactions.</title>
        <authorList>
            <person name="Mayya V."/>
            <person name="Lundgren D.H."/>
            <person name="Hwang S.-I."/>
            <person name="Rezaul K."/>
            <person name="Wu L."/>
            <person name="Eng J.K."/>
            <person name="Rodionov V."/>
            <person name="Han D.K."/>
        </authorList>
    </citation>
    <scope>PHOSPHORYLATION [LARGE SCALE ANALYSIS] AT THR-216</scope>
    <scope>IDENTIFICATION BY MASS SPECTROMETRY [LARGE SCALE ANALYSIS]</scope>
    <source>
        <tissue>Leukemic T-cell</tissue>
    </source>
</reference>
<reference key="10">
    <citation type="journal article" date="2011" name="Cell">
        <title>Rescue of DeltaF508-CFTR trafficking via a GRASP-dependent unconventional secretion pathway.</title>
        <authorList>
            <person name="Gee H.Y."/>
            <person name="Noh S.H."/>
            <person name="Tang B.L."/>
            <person name="Kim K.H."/>
            <person name="Lee M.G."/>
        </authorList>
    </citation>
    <scope>FUNCTION</scope>
</reference>
<reference key="11">
    <citation type="journal article" date="2014" name="J. Proteomics">
        <title>An enzyme assisted RP-RPLC approach for in-depth analysis of human liver phosphoproteome.</title>
        <authorList>
            <person name="Bian Y."/>
            <person name="Song C."/>
            <person name="Cheng K."/>
            <person name="Dong M."/>
            <person name="Wang F."/>
            <person name="Huang J."/>
            <person name="Sun D."/>
            <person name="Wang L."/>
            <person name="Ye M."/>
            <person name="Zou H."/>
        </authorList>
    </citation>
    <scope>IDENTIFICATION BY MASS SPECTROMETRY [LARGE SCALE ANALYSIS]</scope>
    <source>
        <tissue>Liver</tissue>
    </source>
</reference>
<reference key="12">
    <citation type="journal article" date="2021" name="J. Cell Biol.">
        <title>Rapid degradation of GRASP55 and GRASP65 reveals their immediate impact on the Golgi structure.</title>
        <authorList>
            <person name="Zhang Y."/>
            <person name="Seemann J."/>
        </authorList>
    </citation>
    <scope>FUNCTION</scope>
</reference>
<reference evidence="17" key="13">
    <citation type="journal article" date="2015" name="J. Biol. Chem.">
        <title>Structural basis for the interaction between the Golgi reassembly-stacking protein GRASP65 and the Golgi matrix protein GM130.</title>
        <authorList>
            <person name="Hu F."/>
            <person name="Shi X."/>
            <person name="Li B."/>
            <person name="Huang X."/>
            <person name="Morelli X."/>
            <person name="Shi N."/>
        </authorList>
    </citation>
    <scope>X-RAY CRYSTALLOGRAPHY (1.96 ANGSTROMS) OF 2-210 IN COMPLEX WITH GOLGA2</scope>
    <scope>FUNCTION</scope>
    <scope>SUBUNIT</scope>
</reference>
<organism>
    <name type="scientific">Homo sapiens</name>
    <name type="common">Human</name>
    <dbReference type="NCBI Taxonomy" id="9606"/>
    <lineage>
        <taxon>Eukaryota</taxon>
        <taxon>Metazoa</taxon>
        <taxon>Chordata</taxon>
        <taxon>Craniata</taxon>
        <taxon>Vertebrata</taxon>
        <taxon>Euteleostomi</taxon>
        <taxon>Mammalia</taxon>
        <taxon>Eutheria</taxon>
        <taxon>Euarchontoglires</taxon>
        <taxon>Primates</taxon>
        <taxon>Haplorrhini</taxon>
        <taxon>Catarrhini</taxon>
        <taxon>Hominidae</taxon>
        <taxon>Homo</taxon>
    </lineage>
</organism>
<accession>Q9BQQ3</accession>
<accession>B3KWC8</accession>
<accession>Q3SYG7</accession>
<accession>Q8N272</accession>
<accession>Q96H42</accession>
<comment type="function">
    <text evidence="2 8 9 11">Key structural protein of the Golgi apparatus (PubMed:33301566). The membrane cisternae of the Golgi apparatus adhere to each other to form stacks, which are aligned side by side to form the Golgi ribbon (PubMed:33301566). Acting in concert with GORASP2/GRASP55, is required for the formation and maintenance of the Golgi ribbon, and may be dispensable for the formation of stacks (PubMed:33301566). However, other studies suggest that GORASP1 plays an important role in assembly and membrane stacking of the cisternae, and in the reassembly of Golgi stacks after breakdown during mitosis (By similarity). Caspase-mediated cleavage of GORASP1 is required for fragmentation of the Golgi during apoptosis (By similarity). Also mediates, via its interaction with GOLGA2/GM130, the docking of transport vesicles with the Golgi membranes (PubMed:16489344). Mediates ER stress-induced unconventional (ER/Golgi-independent) trafficking of core-glycosylated CFTR to cell membrane (PubMed:21884936).</text>
</comment>
<comment type="subunit">
    <text evidence="1 2 8 10">Homodimer. Forms higher-order oligomers under interphase but not mitotic conditions. Dimers of the protein on one membrane might be able to interact with dimers on another and so stack cisternae (PubMed:26363069). Interacts with the C-terminus of GOLGA2/GM130 under both mitotic and non-mitotic conditions (PubMed:16489344, PubMed:26363069). The interaction is critical for the correct targeting of both proteins to the cis-Golgi. Interacts with TMED2 and TMED3 (By similarity).</text>
</comment>
<comment type="interaction">
    <interactant intactId="EBI-2561458">
        <id>Q9BQQ3</id>
    </interactant>
    <interactant intactId="EBI-2838732">
        <id>O00116</id>
        <label>AGPS</label>
    </interactant>
    <organismsDiffer>false</organismsDiffer>
    <experiments>7</experiments>
</comment>
<comment type="interaction">
    <interactant intactId="EBI-2561458">
        <id>Q9BQQ3</id>
    </interactant>
    <interactant intactId="EBI-2341787">
        <id>Q17RB8</id>
        <label>LONRF1</label>
    </interactant>
    <organismsDiffer>false</organismsDiffer>
    <experiments>6</experiments>
</comment>
<comment type="interaction">
    <interactant intactId="EBI-2561458">
        <id>Q9BQQ3</id>
    </interactant>
    <interactant intactId="EBI-475646">
        <id>P07196</id>
        <label>NEFL</label>
    </interactant>
    <organismsDiffer>false</organismsDiffer>
    <experiments>3</experiments>
</comment>
<comment type="interaction">
    <interactant intactId="EBI-2561458">
        <id>Q9BQQ3</id>
    </interactant>
    <interactant intactId="EBI-2690712">
        <id>Q12765</id>
        <label>SCRN1</label>
    </interactant>
    <organismsDiffer>false</organismsDiffer>
    <experiments>3</experiments>
</comment>
<comment type="interaction">
    <interactant intactId="EBI-2561458">
        <id>Q9BQQ3</id>
    </interactant>
    <interactant intactId="EBI-12027936">
        <id>Q12765-2</id>
        <label>SCRN1</label>
    </interactant>
    <organismsDiffer>false</organismsDiffer>
    <experiments>3</experiments>
</comment>
<comment type="interaction">
    <interactant intactId="EBI-2561458">
        <id>Q9BQQ3</id>
    </interactant>
    <interactant intactId="EBI-3650647">
        <id>Q9BUZ4</id>
        <label>TRAF4</label>
    </interactant>
    <organismsDiffer>false</organismsDiffer>
    <experiments>3</experiments>
</comment>
<comment type="interaction">
    <interactant intactId="EBI-2561458">
        <id>Q9BQQ3</id>
    </interactant>
    <interactant intactId="EBI-25475888">
        <id>PRO_0000449630</id>
        <label>rep</label>
        <dbReference type="UniProtKB" id="P0DTD1"/>
    </interactant>
    <organismsDiffer>true</organismsDiffer>
    <experiments>3</experiments>
</comment>
<comment type="subcellular location">
    <subcellularLocation>
        <location evidence="7">Golgi apparatus</location>
        <location evidence="7">cis-Golgi network membrane</location>
        <topology evidence="16">Peripheral membrane protein</topology>
        <orientation evidence="16">Cytoplasmic side</orientation>
    </subcellularLocation>
    <subcellularLocation>
        <location evidence="7">Endoplasmic reticulum-Golgi intermediate compartment membrane</location>
    </subcellularLocation>
</comment>
<comment type="alternative products">
    <event type="alternative splicing"/>
    <isoform>
        <id>Q9BQQ3-1</id>
        <name>1</name>
        <sequence type="displayed"/>
    </isoform>
    <isoform>
        <id>Q9BQQ3-2</id>
        <name>2</name>
        <sequence type="described" ref="VSP_011307"/>
    </isoform>
    <isoform>
        <id>Q9BQQ3-3</id>
        <name>3</name>
        <sequence type="described" ref="VSP_011306 VSP_011308 VSP_011309"/>
    </isoform>
</comment>
<comment type="PTM">
    <text evidence="2">Phosphorylated by CDC2/B1 and PLK kinases during mitosis. Phosphorylation cycle correlates with the cisternal stacking cycle. Phosphorylation of the homodimer prevents the association of dimers into higher-order oligomers, leading to cisternal unstacking.</text>
</comment>
<comment type="PTM">
    <text evidence="2">Target for caspase-3 cleavage during apoptosis. The cleavage contributes to Golgi fragmentation and occurs very early in the execution phase of apoptosis.</text>
</comment>
<comment type="PTM">
    <text evidence="2">Myristoylated.</text>
</comment>
<comment type="similarity">
    <text evidence="16">Belongs to the GORASP family.</text>
</comment>
<keyword id="KW-0002">3D-structure</keyword>
<keyword id="KW-0025">Alternative splicing</keyword>
<keyword id="KW-0333">Golgi apparatus</keyword>
<keyword id="KW-0449">Lipoprotein</keyword>
<keyword id="KW-0472">Membrane</keyword>
<keyword id="KW-0479">Metal-binding</keyword>
<keyword id="KW-0519">Myristate</keyword>
<keyword id="KW-0597">Phosphoprotein</keyword>
<keyword id="KW-0653">Protein transport</keyword>
<keyword id="KW-1267">Proteomics identification</keyword>
<keyword id="KW-1185">Reference proteome</keyword>
<keyword id="KW-0677">Repeat</keyword>
<keyword id="KW-0813">Transport</keyword>
<keyword id="KW-0862">Zinc</keyword>
<feature type="initiator methionine" description="Removed">
    <location>
        <position position="1"/>
    </location>
</feature>
<feature type="chain" id="PRO_0000087570" description="Golgi reassembly-stacking protein 1">
    <location>
        <begin position="2"/>
        <end position="440"/>
    </location>
</feature>
<feature type="domain" description="PDZ GRASP-type 1" evidence="4">
    <location>
        <begin position="15"/>
        <end position="105"/>
    </location>
</feature>
<feature type="domain" description="PDZ GRASP-type 2" evidence="4">
    <location>
        <begin position="111"/>
        <end position="199"/>
    </location>
</feature>
<feature type="region of interest" description="GRASP" evidence="5">
    <location>
        <begin position="15"/>
        <end position="215"/>
    </location>
</feature>
<feature type="region of interest" description="Essential for interaction with GOLGA2/GM130" evidence="1">
    <location>
        <begin position="190"/>
        <end position="202"/>
    </location>
</feature>
<feature type="region of interest" description="Disordered" evidence="6">
    <location>
        <begin position="205"/>
        <end position="248"/>
    </location>
</feature>
<feature type="region of interest" description="Disordered" evidence="6">
    <location>
        <begin position="261"/>
        <end position="301"/>
    </location>
</feature>
<feature type="region of interest" description="Disordered" evidence="6">
    <location>
        <begin position="327"/>
        <end position="440"/>
    </location>
</feature>
<feature type="compositionally biased region" description="Pro residues" evidence="6">
    <location>
        <begin position="214"/>
        <end position="239"/>
    </location>
</feature>
<feature type="compositionally biased region" description="Low complexity" evidence="6">
    <location>
        <begin position="327"/>
        <end position="336"/>
    </location>
</feature>
<feature type="compositionally biased region" description="Polar residues" evidence="6">
    <location>
        <begin position="337"/>
        <end position="351"/>
    </location>
</feature>
<feature type="binding site" evidence="2">
    <location>
        <position position="18"/>
    </location>
    <ligand>
        <name>Zn(2+)</name>
        <dbReference type="ChEBI" id="CHEBI:29105"/>
    </ligand>
</feature>
<feature type="binding site" evidence="2">
    <location>
        <position position="20"/>
    </location>
    <ligand>
        <name>Zn(2+)</name>
        <dbReference type="ChEBI" id="CHEBI:29105"/>
    </ligand>
</feature>
<feature type="binding site" evidence="2">
    <location>
        <position position="103"/>
    </location>
    <ligand>
        <name>Zn(2+)</name>
        <dbReference type="ChEBI" id="CHEBI:29105"/>
    </ligand>
</feature>
<feature type="modified residue" description="Phosphothreonine" evidence="18 19 20">
    <location>
        <position position="216"/>
    </location>
</feature>
<feature type="modified residue" description="Phosphoserine" evidence="3">
    <location>
        <position position="362"/>
    </location>
</feature>
<feature type="modified residue" description="Phosphoserine" evidence="2">
    <location>
        <position position="364"/>
    </location>
</feature>
<feature type="modified residue" description="Phosphoserine" evidence="3">
    <location>
        <position position="373"/>
    </location>
</feature>
<feature type="lipid moiety-binding region" description="N-myristoyl glycine" evidence="2">
    <location>
        <position position="2"/>
    </location>
</feature>
<feature type="splice variant" id="VSP_011306" description="In isoform 3." evidence="13">
    <location>
        <begin position="1"/>
        <end position="73"/>
    </location>
</feature>
<feature type="splice variant" id="VSP_011307" description="In isoform 2." evidence="14">
    <original>VTVTPNAAWGGEGSLGCGIGYGYLHRIPTQPPSYHKKPPGTPPPSALPLGAPPPDALPPGPTPEDSPSLETGSRQSDYMEALLQAPGSSMEDPLPGPGSPSHSAPDPDGLPHFMETPLQPPPPVQRVMDPGFLDVSGISLLDNSNASVWPSLPSSTELTTTAVSTSGPEDICSSSSSHERGGEATWSGSEFEVSFLDSPGAQAQADHLPQLTLPDSLTSAASPEDGLSAELLEAQAEEEPASTEGLDTGTEAEGLDSQAQISTTE</original>
    <variation>SGMWHWLWVSTPDPNSAPQLPQEATWHPTTFCSTTWCPTT</variation>
    <location>
        <begin position="176"/>
        <end position="440"/>
    </location>
</feature>
<feature type="splice variant" id="VSP_011308" description="In isoform 3." evidence="13">
    <original>GFLDVSGISLLDNS</original>
    <variation>AMPVCGPACPLPQN</variation>
    <location>
        <begin position="306"/>
        <end position="319"/>
    </location>
</feature>
<feature type="splice variant" id="VSP_011309" description="In isoform 3." evidence="13">
    <location>
        <begin position="320"/>
        <end position="440"/>
    </location>
</feature>
<feature type="sequence variant" id="VAR_051016" description="In dbSNP:rs1109643.">
    <original>T</original>
    <variation>M</variation>
    <location>
        <position position="425"/>
    </location>
</feature>
<feature type="sequence conflict" description="In Ref. 2; BAC03598." evidence="16" ref="2">
    <original>G</original>
    <variation>E</variation>
    <location>
        <position position="271"/>
    </location>
</feature>
<feature type="strand" evidence="21">
    <location>
        <begin position="14"/>
        <end position="22"/>
    </location>
</feature>
<feature type="helix" evidence="21">
    <location>
        <begin position="27"/>
        <end position="30"/>
    </location>
</feature>
<feature type="turn" evidence="21">
    <location>
        <begin position="35"/>
        <end position="37"/>
    </location>
</feature>
<feature type="strand" evidence="21">
    <location>
        <begin position="38"/>
        <end position="43"/>
    </location>
</feature>
<feature type="strand" evidence="21">
    <location>
        <begin position="50"/>
        <end position="53"/>
    </location>
</feature>
<feature type="helix" evidence="21">
    <location>
        <begin position="54"/>
        <end position="61"/>
    </location>
</feature>
<feature type="turn" evidence="21">
    <location>
        <begin position="62"/>
        <end position="64"/>
    </location>
</feature>
<feature type="strand" evidence="21">
    <location>
        <begin position="67"/>
        <end position="73"/>
    </location>
</feature>
<feature type="turn" evidence="21">
    <location>
        <begin position="74"/>
        <end position="77"/>
    </location>
</feature>
<feature type="strand" evidence="21">
    <location>
        <begin position="78"/>
        <end position="84"/>
    </location>
</feature>
<feature type="strand" evidence="21">
    <location>
        <begin position="90"/>
        <end position="96"/>
    </location>
</feature>
<feature type="strand" evidence="21">
    <location>
        <begin position="98"/>
        <end position="104"/>
    </location>
</feature>
<feature type="helix" evidence="21">
    <location>
        <begin position="108"/>
        <end position="110"/>
    </location>
</feature>
<feature type="strand" evidence="21">
    <location>
        <begin position="113"/>
        <end position="118"/>
    </location>
</feature>
<feature type="helix" evidence="21">
    <location>
        <begin position="123"/>
        <end position="127"/>
    </location>
</feature>
<feature type="turn" evidence="21">
    <location>
        <begin position="131"/>
        <end position="133"/>
    </location>
</feature>
<feature type="strand" evidence="21">
    <location>
        <begin position="134"/>
        <end position="141"/>
    </location>
</feature>
<feature type="helix" evidence="21">
    <location>
        <begin position="149"/>
        <end position="155"/>
    </location>
</feature>
<feature type="turn" evidence="22">
    <location>
        <begin position="156"/>
        <end position="158"/>
    </location>
</feature>
<feature type="strand" evidence="21">
    <location>
        <begin position="161"/>
        <end position="167"/>
    </location>
</feature>
<feature type="turn" evidence="21">
    <location>
        <begin position="168"/>
        <end position="171"/>
    </location>
</feature>
<feature type="strand" evidence="21">
    <location>
        <begin position="172"/>
        <end position="178"/>
    </location>
</feature>
<feature type="strand" evidence="21">
    <location>
        <begin position="184"/>
        <end position="190"/>
    </location>
</feature>
<feature type="strand" evidence="21">
    <location>
        <begin position="192"/>
        <end position="195"/>
    </location>
</feature>
<proteinExistence type="evidence at protein level"/>